<keyword id="KW-0963">Cytoplasm</keyword>
<keyword id="KW-0378">Hydrolase</keyword>
<keyword id="KW-1185">Reference proteome</keyword>
<keyword id="KW-0694">RNA-binding</keyword>
<keyword id="KW-0820">tRNA-binding</keyword>
<organism>
    <name type="scientific">Lactobacillus delbrueckii subsp. bulgaricus (strain ATCC 11842 / DSM 20081 / BCRC 10696 / JCM 1002 / NBRC 13953 / NCIMB 11778 / NCTC 12712 / WDCM 00102 / Lb 14)</name>
    <dbReference type="NCBI Taxonomy" id="390333"/>
    <lineage>
        <taxon>Bacteria</taxon>
        <taxon>Bacillati</taxon>
        <taxon>Bacillota</taxon>
        <taxon>Bacilli</taxon>
        <taxon>Lactobacillales</taxon>
        <taxon>Lactobacillaceae</taxon>
        <taxon>Lactobacillus</taxon>
    </lineage>
</organism>
<comment type="function">
    <text evidence="1">An aminoacyl-tRNA editing enzyme that deacylates mischarged D-aminoacyl-tRNAs. Also deacylates mischarged glycyl-tRNA(Ala), protecting cells against glycine mischarging by AlaRS. Acts via tRNA-based rather than protein-based catalysis; rejects L-amino acids rather than detecting D-amino acids in the active site. By recycling D-aminoacyl-tRNA to D-amino acids and free tRNA molecules, this enzyme counteracts the toxicity associated with the formation of D-aminoacyl-tRNA entities in vivo and helps enforce protein L-homochirality.</text>
</comment>
<comment type="catalytic activity">
    <reaction evidence="1">
        <text>glycyl-tRNA(Ala) + H2O = tRNA(Ala) + glycine + H(+)</text>
        <dbReference type="Rhea" id="RHEA:53744"/>
        <dbReference type="Rhea" id="RHEA-COMP:9657"/>
        <dbReference type="Rhea" id="RHEA-COMP:13640"/>
        <dbReference type="ChEBI" id="CHEBI:15377"/>
        <dbReference type="ChEBI" id="CHEBI:15378"/>
        <dbReference type="ChEBI" id="CHEBI:57305"/>
        <dbReference type="ChEBI" id="CHEBI:78442"/>
        <dbReference type="ChEBI" id="CHEBI:78522"/>
        <dbReference type="EC" id="3.1.1.96"/>
    </reaction>
</comment>
<comment type="catalytic activity">
    <reaction evidence="1">
        <text>a D-aminoacyl-tRNA + H2O = a tRNA + a D-alpha-amino acid + H(+)</text>
        <dbReference type="Rhea" id="RHEA:13953"/>
        <dbReference type="Rhea" id="RHEA-COMP:10123"/>
        <dbReference type="Rhea" id="RHEA-COMP:10124"/>
        <dbReference type="ChEBI" id="CHEBI:15377"/>
        <dbReference type="ChEBI" id="CHEBI:15378"/>
        <dbReference type="ChEBI" id="CHEBI:59871"/>
        <dbReference type="ChEBI" id="CHEBI:78442"/>
        <dbReference type="ChEBI" id="CHEBI:79333"/>
        <dbReference type="EC" id="3.1.1.96"/>
    </reaction>
</comment>
<comment type="subunit">
    <text evidence="1">Homodimer.</text>
</comment>
<comment type="subcellular location">
    <subcellularLocation>
        <location evidence="1">Cytoplasm</location>
    </subcellularLocation>
</comment>
<comment type="domain">
    <text evidence="1">A Gly-cisPro motif from one monomer fits into the active site of the other monomer to allow specific chiral rejection of L-amino acids.</text>
</comment>
<comment type="similarity">
    <text evidence="1">Belongs to the DTD family.</text>
</comment>
<accession>Q1GAH0</accession>
<protein>
    <recommendedName>
        <fullName evidence="1">D-aminoacyl-tRNA deacylase</fullName>
        <shortName evidence="1">DTD</shortName>
        <ecNumber evidence="1">3.1.1.96</ecNumber>
    </recommendedName>
    <alternativeName>
        <fullName evidence="1">Gly-tRNA(Ala) deacylase</fullName>
    </alternativeName>
</protein>
<sequence>MRVVIQRVNHAAVRIDGETVGQIQKGLLLLVGLAEGDGEEQVVKAADKIAKMRIFEDEAGKTNLGIKDVGGQILSVSQFTLLADTKRGNRPSFVHAMRPPKSSQLWEEFNQELVKRGLTVETGEFGADMKVELENDGPFTIVLDL</sequence>
<gene>
    <name evidence="1" type="primary">dtd</name>
    <name type="ordered locus">Ldb0886</name>
</gene>
<feature type="chain" id="PRO_0000259288" description="D-aminoacyl-tRNA deacylase">
    <location>
        <begin position="1"/>
        <end position="145"/>
    </location>
</feature>
<feature type="short sequence motif" description="Gly-cisPro motif, important for rejection of L-amino acids" evidence="1">
    <location>
        <begin position="137"/>
        <end position="138"/>
    </location>
</feature>
<name>DTD_LACDA</name>
<reference key="1">
    <citation type="journal article" date="2006" name="Proc. Natl. Acad. Sci. U.S.A.">
        <title>The complete genome sequence of Lactobacillus bulgaricus reveals extensive and ongoing reductive evolution.</title>
        <authorList>
            <person name="van de Guchte M."/>
            <person name="Penaud S."/>
            <person name="Grimaldi C."/>
            <person name="Barbe V."/>
            <person name="Bryson K."/>
            <person name="Nicolas P."/>
            <person name="Robert C."/>
            <person name="Oztas S."/>
            <person name="Mangenot S."/>
            <person name="Couloux A."/>
            <person name="Loux V."/>
            <person name="Dervyn R."/>
            <person name="Bossy R."/>
            <person name="Bolotin A."/>
            <person name="Batto J.-M."/>
            <person name="Walunas T."/>
            <person name="Gibrat J.-F."/>
            <person name="Bessieres P."/>
            <person name="Weissenbach J."/>
            <person name="Ehrlich S.D."/>
            <person name="Maguin E."/>
        </authorList>
    </citation>
    <scope>NUCLEOTIDE SEQUENCE [LARGE SCALE GENOMIC DNA]</scope>
    <source>
        <strain>ATCC 11842 / DSM 20081 / BCRC 10696 / JCM 1002 / NBRC 13953 / NCIMB 11778 / NCTC 12712 / WDCM 00102 / Lb 14</strain>
    </source>
</reference>
<proteinExistence type="inferred from homology"/>
<evidence type="ECO:0000255" key="1">
    <source>
        <dbReference type="HAMAP-Rule" id="MF_00518"/>
    </source>
</evidence>
<dbReference type="EC" id="3.1.1.96" evidence="1"/>
<dbReference type="EMBL" id="CR954253">
    <property type="protein sequence ID" value="CAI97707.1"/>
    <property type="molecule type" value="Genomic_DNA"/>
</dbReference>
<dbReference type="RefSeq" id="WP_003619905.1">
    <property type="nucleotide sequence ID" value="NZ_JQAV01000008.1"/>
</dbReference>
<dbReference type="SMR" id="Q1GAH0"/>
<dbReference type="STRING" id="390333.Ldb0886"/>
<dbReference type="KEGG" id="ldb:Ldb0886"/>
<dbReference type="eggNOG" id="COG1490">
    <property type="taxonomic scope" value="Bacteria"/>
</dbReference>
<dbReference type="HOGENOM" id="CLU_076901_1_0_9"/>
<dbReference type="BioCyc" id="LDEL390333:LDB_RS03895-MONOMER"/>
<dbReference type="Proteomes" id="UP000001259">
    <property type="component" value="Chromosome"/>
</dbReference>
<dbReference type="GO" id="GO:0005737">
    <property type="term" value="C:cytoplasm"/>
    <property type="evidence" value="ECO:0007669"/>
    <property type="project" value="UniProtKB-SubCell"/>
</dbReference>
<dbReference type="GO" id="GO:0051500">
    <property type="term" value="F:D-tyrosyl-tRNA(Tyr) deacylase activity"/>
    <property type="evidence" value="ECO:0007669"/>
    <property type="project" value="TreeGrafter"/>
</dbReference>
<dbReference type="GO" id="GO:0106026">
    <property type="term" value="F:Gly-tRNA(Ala) deacylase activity"/>
    <property type="evidence" value="ECO:0007669"/>
    <property type="project" value="UniProtKB-UniRule"/>
</dbReference>
<dbReference type="GO" id="GO:0043908">
    <property type="term" value="F:Ser(Gly)-tRNA(Ala) hydrolase activity"/>
    <property type="evidence" value="ECO:0007669"/>
    <property type="project" value="UniProtKB-UniRule"/>
</dbReference>
<dbReference type="GO" id="GO:0000049">
    <property type="term" value="F:tRNA binding"/>
    <property type="evidence" value="ECO:0007669"/>
    <property type="project" value="UniProtKB-UniRule"/>
</dbReference>
<dbReference type="GO" id="GO:0019478">
    <property type="term" value="P:D-amino acid catabolic process"/>
    <property type="evidence" value="ECO:0007669"/>
    <property type="project" value="UniProtKB-UniRule"/>
</dbReference>
<dbReference type="FunFam" id="3.50.80.10:FF:000001">
    <property type="entry name" value="D-aminoacyl-tRNA deacylase"/>
    <property type="match status" value="1"/>
</dbReference>
<dbReference type="Gene3D" id="3.50.80.10">
    <property type="entry name" value="D-tyrosyl-tRNA(Tyr) deacylase"/>
    <property type="match status" value="1"/>
</dbReference>
<dbReference type="HAMAP" id="MF_00518">
    <property type="entry name" value="Deacylase_Dtd"/>
    <property type="match status" value="1"/>
</dbReference>
<dbReference type="InterPro" id="IPR003732">
    <property type="entry name" value="Daa-tRNA_deacyls_DTD"/>
</dbReference>
<dbReference type="InterPro" id="IPR023509">
    <property type="entry name" value="DTD-like_sf"/>
</dbReference>
<dbReference type="NCBIfam" id="TIGR00256">
    <property type="entry name" value="D-aminoacyl-tRNA deacylase"/>
    <property type="match status" value="1"/>
</dbReference>
<dbReference type="PANTHER" id="PTHR10472:SF5">
    <property type="entry name" value="D-AMINOACYL-TRNA DEACYLASE 1"/>
    <property type="match status" value="1"/>
</dbReference>
<dbReference type="PANTHER" id="PTHR10472">
    <property type="entry name" value="D-TYROSYL-TRNA TYR DEACYLASE"/>
    <property type="match status" value="1"/>
</dbReference>
<dbReference type="Pfam" id="PF02580">
    <property type="entry name" value="Tyr_Deacylase"/>
    <property type="match status" value="1"/>
</dbReference>
<dbReference type="SUPFAM" id="SSF69500">
    <property type="entry name" value="DTD-like"/>
    <property type="match status" value="1"/>
</dbReference>